<accession>Q7VQW5</accession>
<evidence type="ECO:0000255" key="1">
    <source>
        <dbReference type="HAMAP-Rule" id="MF_01013"/>
    </source>
</evidence>
<feature type="chain" id="PRO_0000142124" description="Imidazole glycerol phosphate synthase subunit HisF">
    <location>
        <begin position="1"/>
        <end position="258"/>
    </location>
</feature>
<feature type="active site" evidence="1">
    <location>
        <position position="11"/>
    </location>
</feature>
<feature type="active site" evidence="1">
    <location>
        <position position="130"/>
    </location>
</feature>
<organism>
    <name type="scientific">Blochmanniella floridana</name>
    <dbReference type="NCBI Taxonomy" id="203907"/>
    <lineage>
        <taxon>Bacteria</taxon>
        <taxon>Pseudomonadati</taxon>
        <taxon>Pseudomonadota</taxon>
        <taxon>Gammaproteobacteria</taxon>
        <taxon>Enterobacterales</taxon>
        <taxon>Enterobacteriaceae</taxon>
        <taxon>ant endosymbionts</taxon>
        <taxon>Candidatus Blochmanniella</taxon>
    </lineage>
</organism>
<name>HIS6_BLOFL</name>
<gene>
    <name evidence="1" type="primary">hisF</name>
    <name type="ordered locus">Bfl468</name>
</gene>
<proteinExistence type="inferred from homology"/>
<dbReference type="EC" id="4.3.2.10" evidence="1"/>
<dbReference type="EMBL" id="BX248583">
    <property type="protein sequence ID" value="CAD83527.1"/>
    <property type="molecule type" value="Genomic_DNA"/>
</dbReference>
<dbReference type="SMR" id="Q7VQW5"/>
<dbReference type="STRING" id="203907.Bfl468"/>
<dbReference type="KEGG" id="bfl:Bfl468"/>
<dbReference type="eggNOG" id="COG0107">
    <property type="taxonomic scope" value="Bacteria"/>
</dbReference>
<dbReference type="HOGENOM" id="CLU_048577_4_0_6"/>
<dbReference type="OrthoDB" id="9781903at2"/>
<dbReference type="UniPathway" id="UPA00031">
    <property type="reaction ID" value="UER00010"/>
</dbReference>
<dbReference type="Proteomes" id="UP000002192">
    <property type="component" value="Chromosome"/>
</dbReference>
<dbReference type="GO" id="GO:0005737">
    <property type="term" value="C:cytoplasm"/>
    <property type="evidence" value="ECO:0007669"/>
    <property type="project" value="UniProtKB-SubCell"/>
</dbReference>
<dbReference type="GO" id="GO:0000107">
    <property type="term" value="F:imidazoleglycerol-phosphate synthase activity"/>
    <property type="evidence" value="ECO:0007669"/>
    <property type="project" value="UniProtKB-UniRule"/>
</dbReference>
<dbReference type="GO" id="GO:0016829">
    <property type="term" value="F:lyase activity"/>
    <property type="evidence" value="ECO:0007669"/>
    <property type="project" value="UniProtKB-KW"/>
</dbReference>
<dbReference type="GO" id="GO:0000105">
    <property type="term" value="P:L-histidine biosynthetic process"/>
    <property type="evidence" value="ECO:0007669"/>
    <property type="project" value="UniProtKB-UniRule"/>
</dbReference>
<dbReference type="CDD" id="cd04731">
    <property type="entry name" value="HisF"/>
    <property type="match status" value="1"/>
</dbReference>
<dbReference type="FunFam" id="3.20.20.70:FF:000006">
    <property type="entry name" value="Imidazole glycerol phosphate synthase subunit HisF"/>
    <property type="match status" value="1"/>
</dbReference>
<dbReference type="Gene3D" id="3.20.20.70">
    <property type="entry name" value="Aldolase class I"/>
    <property type="match status" value="1"/>
</dbReference>
<dbReference type="HAMAP" id="MF_01013">
    <property type="entry name" value="HisF"/>
    <property type="match status" value="1"/>
</dbReference>
<dbReference type="InterPro" id="IPR013785">
    <property type="entry name" value="Aldolase_TIM"/>
</dbReference>
<dbReference type="InterPro" id="IPR006062">
    <property type="entry name" value="His_biosynth"/>
</dbReference>
<dbReference type="InterPro" id="IPR004651">
    <property type="entry name" value="HisF"/>
</dbReference>
<dbReference type="InterPro" id="IPR050064">
    <property type="entry name" value="IGPS_HisA/HisF"/>
</dbReference>
<dbReference type="InterPro" id="IPR011060">
    <property type="entry name" value="RibuloseP-bd_barrel"/>
</dbReference>
<dbReference type="NCBIfam" id="TIGR00735">
    <property type="entry name" value="hisF"/>
    <property type="match status" value="1"/>
</dbReference>
<dbReference type="PANTHER" id="PTHR21235:SF2">
    <property type="entry name" value="IMIDAZOLE GLYCEROL PHOSPHATE SYNTHASE HISHF"/>
    <property type="match status" value="1"/>
</dbReference>
<dbReference type="PANTHER" id="PTHR21235">
    <property type="entry name" value="IMIDAZOLE GLYCEROL PHOSPHATE SYNTHASE SUBUNIT HISF/H IGP SYNTHASE SUBUNIT HISF/H"/>
    <property type="match status" value="1"/>
</dbReference>
<dbReference type="Pfam" id="PF00977">
    <property type="entry name" value="His_biosynth"/>
    <property type="match status" value="1"/>
</dbReference>
<dbReference type="SUPFAM" id="SSF51366">
    <property type="entry name" value="Ribulose-phoshate binding barrel"/>
    <property type="match status" value="1"/>
</dbReference>
<comment type="function">
    <text evidence="1">IGPS catalyzes the conversion of PRFAR and glutamine to IGP, AICAR and glutamate. The HisF subunit catalyzes the cyclization activity that produces IGP and AICAR from PRFAR using the ammonia provided by the HisH subunit.</text>
</comment>
<comment type="catalytic activity">
    <reaction evidence="1">
        <text>5-[(5-phospho-1-deoxy-D-ribulos-1-ylimino)methylamino]-1-(5-phospho-beta-D-ribosyl)imidazole-4-carboxamide + L-glutamine = D-erythro-1-(imidazol-4-yl)glycerol 3-phosphate + 5-amino-1-(5-phospho-beta-D-ribosyl)imidazole-4-carboxamide + L-glutamate + H(+)</text>
        <dbReference type="Rhea" id="RHEA:24793"/>
        <dbReference type="ChEBI" id="CHEBI:15378"/>
        <dbReference type="ChEBI" id="CHEBI:29985"/>
        <dbReference type="ChEBI" id="CHEBI:58278"/>
        <dbReference type="ChEBI" id="CHEBI:58359"/>
        <dbReference type="ChEBI" id="CHEBI:58475"/>
        <dbReference type="ChEBI" id="CHEBI:58525"/>
        <dbReference type="EC" id="4.3.2.10"/>
    </reaction>
</comment>
<comment type="pathway">
    <text evidence="1">Amino-acid biosynthesis; L-histidine biosynthesis; L-histidine from 5-phospho-alpha-D-ribose 1-diphosphate: step 5/9.</text>
</comment>
<comment type="subunit">
    <text evidence="1">Heterodimer of HisH and HisF.</text>
</comment>
<comment type="subcellular location">
    <subcellularLocation>
        <location evidence="1">Cytoplasm</location>
    </subcellularLocation>
</comment>
<comment type="similarity">
    <text evidence="1">Belongs to the HisA/HisF family.</text>
</comment>
<sequence>MLAKRIIPCLDVINNQVIKGIQFQNHQIIGDIVSLAQYYSQEGADELVFYDIMASPNNQTVSKKWVAKIAEVINIPFCVAGGISTLYQAKEILKFGADKISINSPALLNPSLIQKLADHLGTQCVVVGIDAWYNAQLGTYQIKCFSGNSSRMQSTTWELLDWVIQIQQYGAGEIVLNMMNQDGMQNGYDLKQLSKIRKHCTIPLIASGGAGTAQHFLDVFQYADVDGALAASVFHKKIIKINELKNFLIKQGVEIRLC</sequence>
<keyword id="KW-0028">Amino-acid biosynthesis</keyword>
<keyword id="KW-0963">Cytoplasm</keyword>
<keyword id="KW-0368">Histidine biosynthesis</keyword>
<keyword id="KW-0456">Lyase</keyword>
<keyword id="KW-1185">Reference proteome</keyword>
<protein>
    <recommendedName>
        <fullName evidence="1">Imidazole glycerol phosphate synthase subunit HisF</fullName>
        <ecNumber evidence="1">4.3.2.10</ecNumber>
    </recommendedName>
    <alternativeName>
        <fullName evidence="1">IGP synthase cyclase subunit</fullName>
    </alternativeName>
    <alternativeName>
        <fullName evidence="1">IGP synthase subunit HisF</fullName>
    </alternativeName>
    <alternativeName>
        <fullName evidence="1">ImGP synthase subunit HisF</fullName>
        <shortName evidence="1">IGPS subunit HisF</shortName>
    </alternativeName>
</protein>
<reference key="1">
    <citation type="journal article" date="2003" name="Proc. Natl. Acad. Sci. U.S.A.">
        <title>The genome sequence of Blochmannia floridanus: comparative analysis of reduced genomes.</title>
        <authorList>
            <person name="Gil R."/>
            <person name="Silva F.J."/>
            <person name="Zientz E."/>
            <person name="Delmotte F."/>
            <person name="Gonzalez-Candelas F."/>
            <person name="Latorre A."/>
            <person name="Rausell C."/>
            <person name="Kamerbeek J."/>
            <person name="Gadau J."/>
            <person name="Hoelldobler B."/>
            <person name="van Ham R.C.H.J."/>
            <person name="Gross R."/>
            <person name="Moya A."/>
        </authorList>
    </citation>
    <scope>NUCLEOTIDE SEQUENCE [LARGE SCALE GENOMIC DNA]</scope>
</reference>